<gene>
    <name type="primary">nrdI</name>
    <name type="ordered locus">SAV0730</name>
</gene>
<evidence type="ECO:0000250" key="1"/>
<evidence type="ECO:0000305" key="2"/>
<sequence>MKIIYFSFTGNVRRFIKRTELENTLEITAENCMEPVHEPFIIVTGTIGFGEVPEPVQSFLEVNHQYIRGVAASGNRNWGLNFAKAGRTISEEYNVPLLMKFELHGKNKDVIEFKNKVGNFNENHGREKVQSY</sequence>
<protein>
    <recommendedName>
        <fullName>Protein NrdI</fullName>
    </recommendedName>
</protein>
<reference key="1">
    <citation type="journal article" date="2001" name="Lancet">
        <title>Whole genome sequencing of meticillin-resistant Staphylococcus aureus.</title>
        <authorList>
            <person name="Kuroda M."/>
            <person name="Ohta T."/>
            <person name="Uchiyama I."/>
            <person name="Baba T."/>
            <person name="Yuzawa H."/>
            <person name="Kobayashi I."/>
            <person name="Cui L."/>
            <person name="Oguchi A."/>
            <person name="Aoki K."/>
            <person name="Nagai Y."/>
            <person name="Lian J.-Q."/>
            <person name="Ito T."/>
            <person name="Kanamori M."/>
            <person name="Matsumaru H."/>
            <person name="Maruyama A."/>
            <person name="Murakami H."/>
            <person name="Hosoyama A."/>
            <person name="Mizutani-Ui Y."/>
            <person name="Takahashi N.K."/>
            <person name="Sawano T."/>
            <person name="Inoue R."/>
            <person name="Kaito C."/>
            <person name="Sekimizu K."/>
            <person name="Hirakawa H."/>
            <person name="Kuhara S."/>
            <person name="Goto S."/>
            <person name="Yabuzaki J."/>
            <person name="Kanehisa M."/>
            <person name="Yamashita A."/>
            <person name="Oshima K."/>
            <person name="Furuya K."/>
            <person name="Yoshino C."/>
            <person name="Shiba T."/>
            <person name="Hattori M."/>
            <person name="Ogasawara N."/>
            <person name="Hayashi H."/>
            <person name="Hiramatsu K."/>
        </authorList>
    </citation>
    <scope>NUCLEOTIDE SEQUENCE [LARGE SCALE GENOMIC DNA]</scope>
    <source>
        <strain>Mu50 / ATCC 700699</strain>
    </source>
</reference>
<organism>
    <name type="scientific">Staphylococcus aureus (strain Mu50 / ATCC 700699)</name>
    <dbReference type="NCBI Taxonomy" id="158878"/>
    <lineage>
        <taxon>Bacteria</taxon>
        <taxon>Bacillati</taxon>
        <taxon>Bacillota</taxon>
        <taxon>Bacilli</taxon>
        <taxon>Bacillales</taxon>
        <taxon>Staphylococcaceae</taxon>
        <taxon>Staphylococcus</taxon>
    </lineage>
</organism>
<comment type="function">
    <text evidence="1">Probably involved in ribonucleotide reductase function.</text>
</comment>
<comment type="similarity">
    <text evidence="2">Belongs to the NrdI family.</text>
</comment>
<dbReference type="EMBL" id="BA000017">
    <property type="protein sequence ID" value="BAB56892.1"/>
    <property type="molecule type" value="Genomic_DNA"/>
</dbReference>
<dbReference type="RefSeq" id="WP_000692521.1">
    <property type="nucleotide sequence ID" value="NC_002758.2"/>
</dbReference>
<dbReference type="SMR" id="P68811"/>
<dbReference type="KEGG" id="sav:SAV0730"/>
<dbReference type="HOGENOM" id="CLU_114845_3_0_9"/>
<dbReference type="PhylomeDB" id="P68811"/>
<dbReference type="Proteomes" id="UP000002481">
    <property type="component" value="Chromosome"/>
</dbReference>
<dbReference type="GO" id="GO:0010181">
    <property type="term" value="F:FMN binding"/>
    <property type="evidence" value="ECO:0007669"/>
    <property type="project" value="InterPro"/>
</dbReference>
<dbReference type="GO" id="GO:0036211">
    <property type="term" value="P:protein modification process"/>
    <property type="evidence" value="ECO:0007669"/>
    <property type="project" value="InterPro"/>
</dbReference>
<dbReference type="Gene3D" id="3.40.50.360">
    <property type="match status" value="1"/>
</dbReference>
<dbReference type="HAMAP" id="MF_00128">
    <property type="entry name" value="NrdI"/>
    <property type="match status" value="1"/>
</dbReference>
<dbReference type="InterPro" id="IPR029039">
    <property type="entry name" value="Flavoprotein-like_sf"/>
</dbReference>
<dbReference type="InterPro" id="IPR020852">
    <property type="entry name" value="RNR_Ib_NrdI_bac"/>
</dbReference>
<dbReference type="InterPro" id="IPR004465">
    <property type="entry name" value="RNR_NrdI"/>
</dbReference>
<dbReference type="NCBIfam" id="TIGR00333">
    <property type="entry name" value="nrdI"/>
    <property type="match status" value="1"/>
</dbReference>
<dbReference type="PANTHER" id="PTHR37297">
    <property type="entry name" value="PROTEIN NRDI"/>
    <property type="match status" value="1"/>
</dbReference>
<dbReference type="PANTHER" id="PTHR37297:SF1">
    <property type="entry name" value="PROTEIN NRDI"/>
    <property type="match status" value="1"/>
</dbReference>
<dbReference type="Pfam" id="PF07972">
    <property type="entry name" value="Flavodoxin_NdrI"/>
    <property type="match status" value="1"/>
</dbReference>
<dbReference type="PIRSF" id="PIRSF005087">
    <property type="entry name" value="NrdI"/>
    <property type="match status" value="1"/>
</dbReference>
<dbReference type="SUPFAM" id="SSF52218">
    <property type="entry name" value="Flavoproteins"/>
    <property type="match status" value="1"/>
</dbReference>
<proteinExistence type="inferred from homology"/>
<name>NRDI_STAAM</name>
<feature type="chain" id="PRO_0000164335" description="Protein NrdI">
    <location>
        <begin position="1"/>
        <end position="132"/>
    </location>
</feature>
<accession>P68811</accession>
<accession>Q99VP3</accession>
<accession>Q9Z5C9</accession>